<accession>Q8G5I6</accession>
<feature type="chain" id="PRO_0000187697" description="Peptidyl-tRNA hydrolase">
    <location>
        <begin position="1"/>
        <end position="199"/>
    </location>
</feature>
<feature type="active site" description="Proton acceptor" evidence="1">
    <location>
        <position position="23"/>
    </location>
</feature>
<feature type="binding site" evidence="1">
    <location>
        <position position="18"/>
    </location>
    <ligand>
        <name>tRNA</name>
        <dbReference type="ChEBI" id="CHEBI:17843"/>
    </ligand>
</feature>
<feature type="binding site" evidence="1">
    <location>
        <position position="72"/>
    </location>
    <ligand>
        <name>tRNA</name>
        <dbReference type="ChEBI" id="CHEBI:17843"/>
    </ligand>
</feature>
<feature type="binding site" evidence="1">
    <location>
        <position position="74"/>
    </location>
    <ligand>
        <name>tRNA</name>
        <dbReference type="ChEBI" id="CHEBI:17843"/>
    </ligand>
</feature>
<feature type="binding site" evidence="1">
    <location>
        <position position="120"/>
    </location>
    <ligand>
        <name>tRNA</name>
        <dbReference type="ChEBI" id="CHEBI:17843"/>
    </ligand>
</feature>
<feature type="site" description="Discriminates between blocked and unblocked aminoacyl-tRNA" evidence="1">
    <location>
        <position position="13"/>
    </location>
</feature>
<feature type="site" description="Stabilizes the basic form of H active site to accept a proton" evidence="1">
    <location>
        <position position="99"/>
    </location>
</feature>
<evidence type="ECO:0000255" key="1">
    <source>
        <dbReference type="HAMAP-Rule" id="MF_00083"/>
    </source>
</evidence>
<sequence>MASDFWLIAGLGNPGKKYEDTRHNMGFMTADVLAERWTVNFADHKGLAMLGKSVMNLDGRTVKFFLAKPLTYMNDSGNAVASISAYYQIEPDHIVVIHDDMDLEFGRIKVKAGGSAGGHNGIKSIDRSLGTPKYARVRMGVGHSKRGANAHDNTVNWVLGGFGPDQRKQLPEFLADGADAAEDIIFHGLAKTQEKFNGR</sequence>
<organism>
    <name type="scientific">Bifidobacterium longum (strain NCC 2705)</name>
    <dbReference type="NCBI Taxonomy" id="206672"/>
    <lineage>
        <taxon>Bacteria</taxon>
        <taxon>Bacillati</taxon>
        <taxon>Actinomycetota</taxon>
        <taxon>Actinomycetes</taxon>
        <taxon>Bifidobacteriales</taxon>
        <taxon>Bifidobacteriaceae</taxon>
        <taxon>Bifidobacterium</taxon>
    </lineage>
</organism>
<protein>
    <recommendedName>
        <fullName evidence="1">Peptidyl-tRNA hydrolase</fullName>
        <shortName evidence="1">Pth</shortName>
        <ecNumber evidence="1">3.1.1.29</ecNumber>
    </recommendedName>
</protein>
<gene>
    <name evidence="1" type="primary">pth</name>
    <name type="ordered locus">BL1026</name>
</gene>
<name>PTH_BIFLO</name>
<proteinExistence type="inferred from homology"/>
<keyword id="KW-0963">Cytoplasm</keyword>
<keyword id="KW-0378">Hydrolase</keyword>
<keyword id="KW-1185">Reference proteome</keyword>
<keyword id="KW-0694">RNA-binding</keyword>
<keyword id="KW-0820">tRNA-binding</keyword>
<dbReference type="EC" id="3.1.1.29" evidence="1"/>
<dbReference type="EMBL" id="AE014295">
    <property type="protein sequence ID" value="AAN24832.1"/>
    <property type="molecule type" value="Genomic_DNA"/>
</dbReference>
<dbReference type="RefSeq" id="NP_696196.1">
    <property type="nucleotide sequence ID" value="NC_004307.2"/>
</dbReference>
<dbReference type="RefSeq" id="WP_007053586.1">
    <property type="nucleotide sequence ID" value="NC_004307.2"/>
</dbReference>
<dbReference type="SMR" id="Q8G5I6"/>
<dbReference type="STRING" id="206672.BL1026"/>
<dbReference type="EnsemblBacteria" id="AAN24832">
    <property type="protein sequence ID" value="AAN24832"/>
    <property type="gene ID" value="BL1026"/>
</dbReference>
<dbReference type="KEGG" id="blo:BL1026"/>
<dbReference type="PATRIC" id="fig|206672.9.peg.729"/>
<dbReference type="HOGENOM" id="CLU_062456_3_1_11"/>
<dbReference type="OrthoDB" id="9800507at2"/>
<dbReference type="PhylomeDB" id="Q8G5I6"/>
<dbReference type="Proteomes" id="UP000000439">
    <property type="component" value="Chromosome"/>
</dbReference>
<dbReference type="GO" id="GO:0005737">
    <property type="term" value="C:cytoplasm"/>
    <property type="evidence" value="ECO:0007669"/>
    <property type="project" value="UniProtKB-SubCell"/>
</dbReference>
<dbReference type="GO" id="GO:0004045">
    <property type="term" value="F:peptidyl-tRNA hydrolase activity"/>
    <property type="evidence" value="ECO:0007669"/>
    <property type="project" value="UniProtKB-UniRule"/>
</dbReference>
<dbReference type="GO" id="GO:0000049">
    <property type="term" value="F:tRNA binding"/>
    <property type="evidence" value="ECO:0007669"/>
    <property type="project" value="UniProtKB-UniRule"/>
</dbReference>
<dbReference type="GO" id="GO:0006515">
    <property type="term" value="P:protein quality control for misfolded or incompletely synthesized proteins"/>
    <property type="evidence" value="ECO:0007669"/>
    <property type="project" value="UniProtKB-UniRule"/>
</dbReference>
<dbReference type="GO" id="GO:0072344">
    <property type="term" value="P:rescue of stalled ribosome"/>
    <property type="evidence" value="ECO:0007669"/>
    <property type="project" value="UniProtKB-UniRule"/>
</dbReference>
<dbReference type="CDD" id="cd00462">
    <property type="entry name" value="PTH"/>
    <property type="match status" value="1"/>
</dbReference>
<dbReference type="FunFam" id="3.40.50.1470:FF:000001">
    <property type="entry name" value="Peptidyl-tRNA hydrolase"/>
    <property type="match status" value="1"/>
</dbReference>
<dbReference type="Gene3D" id="3.40.50.1470">
    <property type="entry name" value="Peptidyl-tRNA hydrolase"/>
    <property type="match status" value="1"/>
</dbReference>
<dbReference type="HAMAP" id="MF_00083">
    <property type="entry name" value="Pept_tRNA_hydro_bact"/>
    <property type="match status" value="1"/>
</dbReference>
<dbReference type="InterPro" id="IPR001328">
    <property type="entry name" value="Pept_tRNA_hydro"/>
</dbReference>
<dbReference type="InterPro" id="IPR018171">
    <property type="entry name" value="Pept_tRNA_hydro_CS"/>
</dbReference>
<dbReference type="InterPro" id="IPR036416">
    <property type="entry name" value="Pept_tRNA_hydro_sf"/>
</dbReference>
<dbReference type="NCBIfam" id="TIGR00447">
    <property type="entry name" value="pth"/>
    <property type="match status" value="1"/>
</dbReference>
<dbReference type="PANTHER" id="PTHR17224">
    <property type="entry name" value="PEPTIDYL-TRNA HYDROLASE"/>
    <property type="match status" value="1"/>
</dbReference>
<dbReference type="PANTHER" id="PTHR17224:SF1">
    <property type="entry name" value="PEPTIDYL-TRNA HYDROLASE"/>
    <property type="match status" value="1"/>
</dbReference>
<dbReference type="Pfam" id="PF01195">
    <property type="entry name" value="Pept_tRNA_hydro"/>
    <property type="match status" value="1"/>
</dbReference>
<dbReference type="SUPFAM" id="SSF53178">
    <property type="entry name" value="Peptidyl-tRNA hydrolase-like"/>
    <property type="match status" value="1"/>
</dbReference>
<dbReference type="PROSITE" id="PS01195">
    <property type="entry name" value="PEPT_TRNA_HYDROL_1"/>
    <property type="match status" value="1"/>
</dbReference>
<dbReference type="PROSITE" id="PS01196">
    <property type="entry name" value="PEPT_TRNA_HYDROL_2"/>
    <property type="match status" value="1"/>
</dbReference>
<reference key="1">
    <citation type="journal article" date="2002" name="Proc. Natl. Acad. Sci. U.S.A.">
        <title>The genome sequence of Bifidobacterium longum reflects its adaptation to the human gastrointestinal tract.</title>
        <authorList>
            <person name="Schell M.A."/>
            <person name="Karmirantzou M."/>
            <person name="Snel B."/>
            <person name="Vilanova D."/>
            <person name="Berger B."/>
            <person name="Pessi G."/>
            <person name="Zwahlen M.-C."/>
            <person name="Desiere F."/>
            <person name="Bork P."/>
            <person name="Delley M."/>
            <person name="Pridmore R.D."/>
            <person name="Arigoni F."/>
        </authorList>
    </citation>
    <scope>NUCLEOTIDE SEQUENCE [LARGE SCALE GENOMIC DNA]</scope>
    <source>
        <strain>NCC 2705</strain>
    </source>
</reference>
<comment type="function">
    <text evidence="1">Hydrolyzes ribosome-free peptidyl-tRNAs (with 1 or more amino acids incorporated), which drop off the ribosome during protein synthesis, or as a result of ribosome stalling.</text>
</comment>
<comment type="function">
    <text evidence="1">Catalyzes the release of premature peptidyl moieties from peptidyl-tRNA molecules trapped in stalled 50S ribosomal subunits, and thus maintains levels of free tRNAs and 50S ribosomes.</text>
</comment>
<comment type="catalytic activity">
    <reaction evidence="1">
        <text>an N-acyl-L-alpha-aminoacyl-tRNA + H2O = an N-acyl-L-amino acid + a tRNA + H(+)</text>
        <dbReference type="Rhea" id="RHEA:54448"/>
        <dbReference type="Rhea" id="RHEA-COMP:10123"/>
        <dbReference type="Rhea" id="RHEA-COMP:13883"/>
        <dbReference type="ChEBI" id="CHEBI:15377"/>
        <dbReference type="ChEBI" id="CHEBI:15378"/>
        <dbReference type="ChEBI" id="CHEBI:59874"/>
        <dbReference type="ChEBI" id="CHEBI:78442"/>
        <dbReference type="ChEBI" id="CHEBI:138191"/>
        <dbReference type="EC" id="3.1.1.29"/>
    </reaction>
</comment>
<comment type="subunit">
    <text evidence="1">Monomer.</text>
</comment>
<comment type="subcellular location">
    <subcellularLocation>
        <location evidence="1">Cytoplasm</location>
    </subcellularLocation>
</comment>
<comment type="similarity">
    <text evidence="1">Belongs to the PTH family.</text>
</comment>